<evidence type="ECO:0000255" key="1">
    <source>
        <dbReference type="HAMAP-Rule" id="MF_01558"/>
    </source>
</evidence>
<evidence type="ECO:0000255" key="2">
    <source>
        <dbReference type="PROSITE-ProRule" id="PRU01083"/>
    </source>
</evidence>
<sequence>MHPRFQTAFAQLADNLQSALAPILADKHFPALLTGEQVSSLKSATGLDEDALAFALLPLAAACARTPLSNFNVGAIARGVSGTWYFGANMEFIGATMQQTVHAEQSAISHAWLSGEKALAAITVNYTPCGHCRQFMNELNSGLDLRIHLPGREAHALRDYLPDAFGPKDLEIKTLLMDEQDHGFALTGDALSQAAIAAANRSHMPYSKSPSGVALECKDGRIFSGSYAENAAFNPTLPPLQGALILLNLKGYDYPDIQRAILAEKADAPLIQWDATAATLKALGCNTIDRVLLG</sequence>
<gene>
    <name evidence="1" type="primary">cdd</name>
    <name type="ordered locus">EFER_2228</name>
</gene>
<proteinExistence type="inferred from homology"/>
<keyword id="KW-0378">Hydrolase</keyword>
<keyword id="KW-0479">Metal-binding</keyword>
<keyword id="KW-0862">Zinc</keyword>
<protein>
    <recommendedName>
        <fullName evidence="1">Cytidine deaminase</fullName>
        <ecNumber evidence="1">3.5.4.5</ecNumber>
    </recommendedName>
    <alternativeName>
        <fullName evidence="1">Cytidine aminohydrolase</fullName>
        <shortName evidence="1">CDA</shortName>
    </alternativeName>
</protein>
<feature type="chain" id="PRO_1000147104" description="Cytidine deaminase">
    <location>
        <begin position="1"/>
        <end position="294"/>
    </location>
</feature>
<feature type="domain" description="CMP/dCMP-type deaminase 1" evidence="2">
    <location>
        <begin position="48"/>
        <end position="168"/>
    </location>
</feature>
<feature type="domain" description="CMP/dCMP-type deaminase 2" evidence="2">
    <location>
        <begin position="186"/>
        <end position="294"/>
    </location>
</feature>
<feature type="active site" description="Proton donor" evidence="1">
    <location>
        <position position="104"/>
    </location>
</feature>
<feature type="binding site" evidence="1">
    <location>
        <begin position="89"/>
        <end position="91"/>
    </location>
    <ligand>
        <name>substrate</name>
    </ligand>
</feature>
<feature type="binding site" evidence="1">
    <location>
        <position position="102"/>
    </location>
    <ligand>
        <name>Zn(2+)</name>
        <dbReference type="ChEBI" id="CHEBI:29105"/>
        <note>catalytic</note>
    </ligand>
</feature>
<feature type="binding site" evidence="1">
    <location>
        <position position="129"/>
    </location>
    <ligand>
        <name>Zn(2+)</name>
        <dbReference type="ChEBI" id="CHEBI:29105"/>
        <note>catalytic</note>
    </ligand>
</feature>
<feature type="binding site" evidence="1">
    <location>
        <position position="132"/>
    </location>
    <ligand>
        <name>Zn(2+)</name>
        <dbReference type="ChEBI" id="CHEBI:29105"/>
        <note>catalytic</note>
    </ligand>
</feature>
<dbReference type="EC" id="3.5.4.5" evidence="1"/>
<dbReference type="EMBL" id="CU928158">
    <property type="protein sequence ID" value="CAQ89730.1"/>
    <property type="molecule type" value="Genomic_DNA"/>
</dbReference>
<dbReference type="RefSeq" id="WP_000553537.1">
    <property type="nucleotide sequence ID" value="NC_011740.1"/>
</dbReference>
<dbReference type="SMR" id="B7LVA3"/>
<dbReference type="GeneID" id="75056739"/>
<dbReference type="KEGG" id="efe:EFER_2228"/>
<dbReference type="HOGENOM" id="CLU_052424_0_0_6"/>
<dbReference type="OrthoDB" id="9795347at2"/>
<dbReference type="Proteomes" id="UP000000745">
    <property type="component" value="Chromosome"/>
</dbReference>
<dbReference type="GO" id="GO:0005829">
    <property type="term" value="C:cytosol"/>
    <property type="evidence" value="ECO:0007669"/>
    <property type="project" value="TreeGrafter"/>
</dbReference>
<dbReference type="GO" id="GO:0004126">
    <property type="term" value="F:cytidine deaminase activity"/>
    <property type="evidence" value="ECO:0007669"/>
    <property type="project" value="UniProtKB-UniRule"/>
</dbReference>
<dbReference type="GO" id="GO:0042802">
    <property type="term" value="F:identical protein binding"/>
    <property type="evidence" value="ECO:0007669"/>
    <property type="project" value="UniProtKB-ARBA"/>
</dbReference>
<dbReference type="GO" id="GO:0008270">
    <property type="term" value="F:zinc ion binding"/>
    <property type="evidence" value="ECO:0007669"/>
    <property type="project" value="UniProtKB-UniRule"/>
</dbReference>
<dbReference type="GO" id="GO:0009972">
    <property type="term" value="P:cytidine deamination"/>
    <property type="evidence" value="ECO:0007669"/>
    <property type="project" value="InterPro"/>
</dbReference>
<dbReference type="CDD" id="cd01283">
    <property type="entry name" value="cytidine_deaminase"/>
    <property type="match status" value="2"/>
</dbReference>
<dbReference type="FunFam" id="3.40.140.10:FF:000006">
    <property type="entry name" value="Cytidine deaminase"/>
    <property type="match status" value="1"/>
</dbReference>
<dbReference type="FunFam" id="3.40.140.10:FF:000007">
    <property type="entry name" value="Cytidine deaminase"/>
    <property type="match status" value="1"/>
</dbReference>
<dbReference type="Gene3D" id="3.40.140.10">
    <property type="entry name" value="Cytidine Deaminase, domain 2"/>
    <property type="match status" value="2"/>
</dbReference>
<dbReference type="HAMAP" id="MF_01558">
    <property type="entry name" value="Cyt_deam"/>
    <property type="match status" value="1"/>
</dbReference>
<dbReference type="InterPro" id="IPR016192">
    <property type="entry name" value="APOBEC/CMP_deaminase_Zn-bd"/>
</dbReference>
<dbReference type="InterPro" id="IPR002125">
    <property type="entry name" value="CMP_dCMP_dom"/>
</dbReference>
<dbReference type="InterPro" id="IPR013171">
    <property type="entry name" value="Cyd/dCyd_deaminase_Zn-bd"/>
</dbReference>
<dbReference type="InterPro" id="IPR050202">
    <property type="entry name" value="Cyt/Deoxycyt_deaminase"/>
</dbReference>
<dbReference type="InterPro" id="IPR006263">
    <property type="entry name" value="Cyt_deam_dimer"/>
</dbReference>
<dbReference type="InterPro" id="IPR016193">
    <property type="entry name" value="Cytidine_deaminase-like"/>
</dbReference>
<dbReference type="InterPro" id="IPR020797">
    <property type="entry name" value="Cytidine_deaminase_bacteria"/>
</dbReference>
<dbReference type="NCBIfam" id="TIGR01355">
    <property type="entry name" value="cyt_deam_dimer"/>
    <property type="match status" value="1"/>
</dbReference>
<dbReference type="NCBIfam" id="NF006537">
    <property type="entry name" value="PRK09027.1"/>
    <property type="match status" value="1"/>
</dbReference>
<dbReference type="PANTHER" id="PTHR11644">
    <property type="entry name" value="CYTIDINE DEAMINASE"/>
    <property type="match status" value="1"/>
</dbReference>
<dbReference type="PANTHER" id="PTHR11644:SF2">
    <property type="entry name" value="CYTIDINE DEAMINASE"/>
    <property type="match status" value="1"/>
</dbReference>
<dbReference type="Pfam" id="PF00383">
    <property type="entry name" value="dCMP_cyt_deam_1"/>
    <property type="match status" value="1"/>
</dbReference>
<dbReference type="Pfam" id="PF08211">
    <property type="entry name" value="dCMP_cyt_deam_2"/>
    <property type="match status" value="1"/>
</dbReference>
<dbReference type="PIRSF" id="PIRSF006334">
    <property type="entry name" value="Cdd_plus_pseudo"/>
    <property type="match status" value="1"/>
</dbReference>
<dbReference type="SUPFAM" id="SSF53927">
    <property type="entry name" value="Cytidine deaminase-like"/>
    <property type="match status" value="2"/>
</dbReference>
<dbReference type="PROSITE" id="PS00903">
    <property type="entry name" value="CYT_DCMP_DEAMINASES_1"/>
    <property type="match status" value="1"/>
</dbReference>
<dbReference type="PROSITE" id="PS51747">
    <property type="entry name" value="CYT_DCMP_DEAMINASES_2"/>
    <property type="match status" value="2"/>
</dbReference>
<organism>
    <name type="scientific">Escherichia fergusonii (strain ATCC 35469 / DSM 13698 / CCUG 18766 / IAM 14443 / JCM 21226 / LMG 7866 / NBRC 102419 / NCTC 12128 / CDC 0568-73)</name>
    <dbReference type="NCBI Taxonomy" id="585054"/>
    <lineage>
        <taxon>Bacteria</taxon>
        <taxon>Pseudomonadati</taxon>
        <taxon>Pseudomonadota</taxon>
        <taxon>Gammaproteobacteria</taxon>
        <taxon>Enterobacterales</taxon>
        <taxon>Enterobacteriaceae</taxon>
        <taxon>Escherichia</taxon>
    </lineage>
</organism>
<comment type="function">
    <text evidence="1">This enzyme scavenges exogenous and endogenous cytidine and 2'-deoxycytidine for UMP synthesis.</text>
</comment>
<comment type="catalytic activity">
    <reaction evidence="1">
        <text>cytidine + H2O + H(+) = uridine + NH4(+)</text>
        <dbReference type="Rhea" id="RHEA:16069"/>
        <dbReference type="ChEBI" id="CHEBI:15377"/>
        <dbReference type="ChEBI" id="CHEBI:15378"/>
        <dbReference type="ChEBI" id="CHEBI:16704"/>
        <dbReference type="ChEBI" id="CHEBI:17562"/>
        <dbReference type="ChEBI" id="CHEBI:28938"/>
        <dbReference type="EC" id="3.5.4.5"/>
    </reaction>
</comment>
<comment type="catalytic activity">
    <reaction evidence="1">
        <text>2'-deoxycytidine + H2O + H(+) = 2'-deoxyuridine + NH4(+)</text>
        <dbReference type="Rhea" id="RHEA:13433"/>
        <dbReference type="ChEBI" id="CHEBI:15377"/>
        <dbReference type="ChEBI" id="CHEBI:15378"/>
        <dbReference type="ChEBI" id="CHEBI:15698"/>
        <dbReference type="ChEBI" id="CHEBI:16450"/>
        <dbReference type="ChEBI" id="CHEBI:28938"/>
        <dbReference type="EC" id="3.5.4.5"/>
    </reaction>
</comment>
<comment type="cofactor">
    <cofactor evidence="1">
        <name>Zn(2+)</name>
        <dbReference type="ChEBI" id="CHEBI:29105"/>
    </cofactor>
    <text evidence="1">Binds 1 zinc ion.</text>
</comment>
<comment type="subunit">
    <text evidence="1">Homodimer.</text>
</comment>
<comment type="similarity">
    <text evidence="1">Belongs to the cytidine and deoxycytidylate deaminase family.</text>
</comment>
<accession>B7LVA3</accession>
<reference key="1">
    <citation type="journal article" date="2009" name="PLoS Genet.">
        <title>Organised genome dynamics in the Escherichia coli species results in highly diverse adaptive paths.</title>
        <authorList>
            <person name="Touchon M."/>
            <person name="Hoede C."/>
            <person name="Tenaillon O."/>
            <person name="Barbe V."/>
            <person name="Baeriswyl S."/>
            <person name="Bidet P."/>
            <person name="Bingen E."/>
            <person name="Bonacorsi S."/>
            <person name="Bouchier C."/>
            <person name="Bouvet O."/>
            <person name="Calteau A."/>
            <person name="Chiapello H."/>
            <person name="Clermont O."/>
            <person name="Cruveiller S."/>
            <person name="Danchin A."/>
            <person name="Diard M."/>
            <person name="Dossat C."/>
            <person name="Karoui M.E."/>
            <person name="Frapy E."/>
            <person name="Garry L."/>
            <person name="Ghigo J.M."/>
            <person name="Gilles A.M."/>
            <person name="Johnson J."/>
            <person name="Le Bouguenec C."/>
            <person name="Lescat M."/>
            <person name="Mangenot S."/>
            <person name="Martinez-Jehanne V."/>
            <person name="Matic I."/>
            <person name="Nassif X."/>
            <person name="Oztas S."/>
            <person name="Petit M.A."/>
            <person name="Pichon C."/>
            <person name="Rouy Z."/>
            <person name="Ruf C.S."/>
            <person name="Schneider D."/>
            <person name="Tourret J."/>
            <person name="Vacherie B."/>
            <person name="Vallenet D."/>
            <person name="Medigue C."/>
            <person name="Rocha E.P.C."/>
            <person name="Denamur E."/>
        </authorList>
    </citation>
    <scope>NUCLEOTIDE SEQUENCE [LARGE SCALE GENOMIC DNA]</scope>
    <source>
        <strain>ATCC 35469 / DSM 13698 / BCRC 15582 / CCUG 18766 / IAM 14443 / JCM 21226 / LMG 7866 / NBRC 102419 / NCTC 12128 / CDC 0568-73</strain>
    </source>
</reference>
<name>CDD_ESCF3</name>